<gene>
    <name evidence="1" type="primary">trpR</name>
    <name type="ordered locus">EFER_4492</name>
</gene>
<evidence type="ECO:0000255" key="1">
    <source>
        <dbReference type="HAMAP-Rule" id="MF_00475"/>
    </source>
</evidence>
<keyword id="KW-0963">Cytoplasm</keyword>
<keyword id="KW-0238">DNA-binding</keyword>
<keyword id="KW-0678">Repressor</keyword>
<keyword id="KW-0804">Transcription</keyword>
<keyword id="KW-0805">Transcription regulation</keyword>
<accession>B7LNT5</accession>
<name>TRPR_ESCF3</name>
<sequence>MAQQSPYSAAMAEQRHQEWLRFVDLLKNAYQNDLHLPLLNLMLTPDEREALGTRVRIVEELLRGEMSQRELKNELGAGIATITRGSNSLKAAPVELRQWLEEVLLKDH</sequence>
<feature type="chain" id="PRO_1000197149" description="Trp operon repressor">
    <location>
        <begin position="1"/>
        <end position="108"/>
    </location>
</feature>
<feature type="DNA-binding region" evidence="1">
    <location>
        <begin position="68"/>
        <end position="91"/>
    </location>
</feature>
<reference key="1">
    <citation type="journal article" date="2009" name="PLoS Genet.">
        <title>Organised genome dynamics in the Escherichia coli species results in highly diverse adaptive paths.</title>
        <authorList>
            <person name="Touchon M."/>
            <person name="Hoede C."/>
            <person name="Tenaillon O."/>
            <person name="Barbe V."/>
            <person name="Baeriswyl S."/>
            <person name="Bidet P."/>
            <person name="Bingen E."/>
            <person name="Bonacorsi S."/>
            <person name="Bouchier C."/>
            <person name="Bouvet O."/>
            <person name="Calteau A."/>
            <person name="Chiapello H."/>
            <person name="Clermont O."/>
            <person name="Cruveiller S."/>
            <person name="Danchin A."/>
            <person name="Diard M."/>
            <person name="Dossat C."/>
            <person name="Karoui M.E."/>
            <person name="Frapy E."/>
            <person name="Garry L."/>
            <person name="Ghigo J.M."/>
            <person name="Gilles A.M."/>
            <person name="Johnson J."/>
            <person name="Le Bouguenec C."/>
            <person name="Lescat M."/>
            <person name="Mangenot S."/>
            <person name="Martinez-Jehanne V."/>
            <person name="Matic I."/>
            <person name="Nassif X."/>
            <person name="Oztas S."/>
            <person name="Petit M.A."/>
            <person name="Pichon C."/>
            <person name="Rouy Z."/>
            <person name="Ruf C.S."/>
            <person name="Schneider D."/>
            <person name="Tourret J."/>
            <person name="Vacherie B."/>
            <person name="Vallenet D."/>
            <person name="Medigue C."/>
            <person name="Rocha E.P.C."/>
            <person name="Denamur E."/>
        </authorList>
    </citation>
    <scope>NUCLEOTIDE SEQUENCE [LARGE SCALE GENOMIC DNA]</scope>
    <source>
        <strain>ATCC 35469 / DSM 13698 / BCRC 15582 / CCUG 18766 / IAM 14443 / JCM 21226 / LMG 7866 / NBRC 102419 / NCTC 12128 / CDC 0568-73</strain>
    </source>
</reference>
<organism>
    <name type="scientific">Escherichia fergusonii (strain ATCC 35469 / DSM 13698 / CCUG 18766 / IAM 14443 / JCM 21226 / LMG 7866 / NBRC 102419 / NCTC 12128 / CDC 0568-73)</name>
    <dbReference type="NCBI Taxonomy" id="585054"/>
    <lineage>
        <taxon>Bacteria</taxon>
        <taxon>Pseudomonadati</taxon>
        <taxon>Pseudomonadota</taxon>
        <taxon>Gammaproteobacteria</taxon>
        <taxon>Enterobacterales</taxon>
        <taxon>Enterobacteriaceae</taxon>
        <taxon>Escherichia</taxon>
    </lineage>
</organism>
<dbReference type="EMBL" id="CU928158">
    <property type="protein sequence ID" value="CAQ91905.1"/>
    <property type="molecule type" value="Genomic_DNA"/>
</dbReference>
<dbReference type="RefSeq" id="WP_000068678.1">
    <property type="nucleotide sequence ID" value="NC_011740.1"/>
</dbReference>
<dbReference type="SMR" id="B7LNT5"/>
<dbReference type="GeneID" id="75058921"/>
<dbReference type="KEGG" id="efe:EFER_4492"/>
<dbReference type="HOGENOM" id="CLU_147939_0_0_6"/>
<dbReference type="OrthoDB" id="5704033at2"/>
<dbReference type="Proteomes" id="UP000000745">
    <property type="component" value="Chromosome"/>
</dbReference>
<dbReference type="GO" id="GO:0005737">
    <property type="term" value="C:cytoplasm"/>
    <property type="evidence" value="ECO:0007669"/>
    <property type="project" value="UniProtKB-SubCell"/>
</dbReference>
<dbReference type="GO" id="GO:0003700">
    <property type="term" value="F:DNA-binding transcription factor activity"/>
    <property type="evidence" value="ECO:0007669"/>
    <property type="project" value="InterPro"/>
</dbReference>
<dbReference type="GO" id="GO:0043565">
    <property type="term" value="F:sequence-specific DNA binding"/>
    <property type="evidence" value="ECO:0007669"/>
    <property type="project" value="InterPro"/>
</dbReference>
<dbReference type="GO" id="GO:0045892">
    <property type="term" value="P:negative regulation of DNA-templated transcription"/>
    <property type="evidence" value="ECO:0007669"/>
    <property type="project" value="UniProtKB-UniRule"/>
</dbReference>
<dbReference type="FunFam" id="1.10.1270.10:FF:000001">
    <property type="entry name" value="Trp operon repressor"/>
    <property type="match status" value="1"/>
</dbReference>
<dbReference type="Gene3D" id="1.10.1270.10">
    <property type="entry name" value="TrpR-like"/>
    <property type="match status" value="1"/>
</dbReference>
<dbReference type="HAMAP" id="MF_00475">
    <property type="entry name" value="Trp_repressor"/>
    <property type="match status" value="1"/>
</dbReference>
<dbReference type="InterPro" id="IPR000831">
    <property type="entry name" value="Trp_repress"/>
</dbReference>
<dbReference type="InterPro" id="IPR013335">
    <property type="entry name" value="Trp_repress_bac"/>
</dbReference>
<dbReference type="InterPro" id="IPR010921">
    <property type="entry name" value="Trp_repressor/repl_initiator"/>
</dbReference>
<dbReference type="InterPro" id="IPR038116">
    <property type="entry name" value="TrpR-like_sf"/>
</dbReference>
<dbReference type="NCBIfam" id="TIGR01321">
    <property type="entry name" value="TrpR"/>
    <property type="match status" value="1"/>
</dbReference>
<dbReference type="PANTHER" id="PTHR38025">
    <property type="entry name" value="TRP OPERON REPRESSOR"/>
    <property type="match status" value="1"/>
</dbReference>
<dbReference type="PANTHER" id="PTHR38025:SF1">
    <property type="entry name" value="TRP OPERON REPRESSOR"/>
    <property type="match status" value="1"/>
</dbReference>
<dbReference type="Pfam" id="PF01371">
    <property type="entry name" value="Trp_repressor"/>
    <property type="match status" value="1"/>
</dbReference>
<dbReference type="PIRSF" id="PIRSF003196">
    <property type="entry name" value="Trp_repressor"/>
    <property type="match status" value="1"/>
</dbReference>
<dbReference type="SUPFAM" id="SSF48295">
    <property type="entry name" value="TrpR-like"/>
    <property type="match status" value="1"/>
</dbReference>
<protein>
    <recommendedName>
        <fullName evidence="1">Trp operon repressor</fullName>
    </recommendedName>
</protein>
<comment type="function">
    <text evidence="1">This protein is an aporepressor. When complexed with L-tryptophan it binds the operator region of the trp operon (5'-ACTAGT-'3') and prevents the initiation of transcription. The complex also regulates trp repressor biosynthesis by binding to its regulatory region.</text>
</comment>
<comment type="subunit">
    <text evidence="1">Homodimer.</text>
</comment>
<comment type="subcellular location">
    <subcellularLocation>
        <location evidence="1">Cytoplasm</location>
    </subcellularLocation>
</comment>
<comment type="similarity">
    <text evidence="1">Belongs to the TrpR family.</text>
</comment>
<proteinExistence type="inferred from homology"/>